<comment type="function">
    <text evidence="1">Catalyzes the reaction of cyanate with bicarbonate to produce ammonia and carbon dioxide.</text>
</comment>
<comment type="catalytic activity">
    <reaction evidence="1">
        <text>cyanate + hydrogencarbonate + 3 H(+) = NH4(+) + 2 CO2</text>
        <dbReference type="Rhea" id="RHEA:11120"/>
        <dbReference type="ChEBI" id="CHEBI:15378"/>
        <dbReference type="ChEBI" id="CHEBI:16526"/>
        <dbReference type="ChEBI" id="CHEBI:17544"/>
        <dbReference type="ChEBI" id="CHEBI:28938"/>
        <dbReference type="ChEBI" id="CHEBI:29195"/>
        <dbReference type="EC" id="4.2.1.104"/>
    </reaction>
</comment>
<comment type="similarity">
    <text evidence="1">Belongs to the cyanase family.</text>
</comment>
<comment type="sequence caution" evidence="2">
    <conflict type="erroneous initiation">
        <sequence resource="EMBL-CDS" id="AAS06648"/>
    </conflict>
</comment>
<name>CYNS_MYCPA</name>
<evidence type="ECO:0000255" key="1">
    <source>
        <dbReference type="HAMAP-Rule" id="MF_00535"/>
    </source>
</evidence>
<evidence type="ECO:0000305" key="2"/>
<organism>
    <name type="scientific">Mycolicibacterium paratuberculosis (strain ATCC BAA-968 / K-10)</name>
    <name type="common">Mycobacterium paratuberculosis</name>
    <dbReference type="NCBI Taxonomy" id="262316"/>
    <lineage>
        <taxon>Bacteria</taxon>
        <taxon>Bacillati</taxon>
        <taxon>Actinomycetota</taxon>
        <taxon>Actinomycetes</taxon>
        <taxon>Mycobacteriales</taxon>
        <taxon>Mycobacteriaceae</taxon>
        <taxon>Mycobacterium</taxon>
        <taxon>Mycobacterium avium complex (MAC)</taxon>
    </lineage>
</organism>
<feature type="chain" id="PRO_0000187525" description="Cyanate hydratase">
    <location>
        <begin position="1"/>
        <end position="155"/>
    </location>
</feature>
<feature type="active site" evidence="1">
    <location>
        <position position="92"/>
    </location>
</feature>
<feature type="active site" evidence="1">
    <location>
        <position position="95"/>
    </location>
</feature>
<feature type="active site" evidence="1">
    <location>
        <position position="118"/>
    </location>
</feature>
<reference key="1">
    <citation type="journal article" date="2005" name="Proc. Natl. Acad. Sci. U.S.A.">
        <title>The complete genome sequence of Mycobacterium avium subspecies paratuberculosis.</title>
        <authorList>
            <person name="Li L."/>
            <person name="Bannantine J.P."/>
            <person name="Zhang Q."/>
            <person name="Amonsin A."/>
            <person name="May B.J."/>
            <person name="Alt D."/>
            <person name="Banerji N."/>
            <person name="Kanjilal S."/>
            <person name="Kapur V."/>
        </authorList>
    </citation>
    <scope>NUCLEOTIDE SEQUENCE [LARGE SCALE GENOMIC DNA]</scope>
    <source>
        <strain>ATCC BAA-968 / K-10</strain>
    </source>
</reference>
<proteinExistence type="inferred from homology"/>
<dbReference type="EC" id="4.2.1.104" evidence="1"/>
<dbReference type="EMBL" id="AE016958">
    <property type="protein sequence ID" value="AAS06648.1"/>
    <property type="status" value="ALT_INIT"/>
    <property type="molecule type" value="Genomic_DNA"/>
</dbReference>
<dbReference type="RefSeq" id="WP_003873583.1">
    <property type="nucleotide sequence ID" value="NZ_CP106873.1"/>
</dbReference>
<dbReference type="SMR" id="P61192"/>
<dbReference type="STRING" id="262316.MAP_4098"/>
<dbReference type="GeneID" id="75272055"/>
<dbReference type="KEGG" id="mpa:MAP_4098"/>
<dbReference type="eggNOG" id="COG1513">
    <property type="taxonomic scope" value="Bacteria"/>
</dbReference>
<dbReference type="HOGENOM" id="CLU_103452_1_0_11"/>
<dbReference type="Proteomes" id="UP000000580">
    <property type="component" value="Chromosome"/>
</dbReference>
<dbReference type="GO" id="GO:0008824">
    <property type="term" value="F:cyanate hydratase activity"/>
    <property type="evidence" value="ECO:0007669"/>
    <property type="project" value="UniProtKB-UniRule"/>
</dbReference>
<dbReference type="GO" id="GO:0003677">
    <property type="term" value="F:DNA binding"/>
    <property type="evidence" value="ECO:0007669"/>
    <property type="project" value="InterPro"/>
</dbReference>
<dbReference type="GO" id="GO:0009439">
    <property type="term" value="P:cyanate metabolic process"/>
    <property type="evidence" value="ECO:0007669"/>
    <property type="project" value="UniProtKB-UniRule"/>
</dbReference>
<dbReference type="CDD" id="cd00559">
    <property type="entry name" value="Cyanase_C"/>
    <property type="match status" value="1"/>
</dbReference>
<dbReference type="Gene3D" id="3.30.1160.10">
    <property type="entry name" value="Cyanate lyase, C-terminal domain"/>
    <property type="match status" value="1"/>
</dbReference>
<dbReference type="Gene3D" id="1.10.260.40">
    <property type="entry name" value="lambda repressor-like DNA-binding domains"/>
    <property type="match status" value="1"/>
</dbReference>
<dbReference type="HAMAP" id="MF_00535">
    <property type="entry name" value="Cyanate_hydrat"/>
    <property type="match status" value="1"/>
</dbReference>
<dbReference type="InterPro" id="IPR008076">
    <property type="entry name" value="Cyanase"/>
</dbReference>
<dbReference type="InterPro" id="IPR003712">
    <property type="entry name" value="Cyanate_lyase_C"/>
</dbReference>
<dbReference type="InterPro" id="IPR036581">
    <property type="entry name" value="Cyanate_lyase_C_sf"/>
</dbReference>
<dbReference type="InterPro" id="IPR048564">
    <property type="entry name" value="CYNS_N"/>
</dbReference>
<dbReference type="InterPro" id="IPR010982">
    <property type="entry name" value="Lambda_DNA-bd_dom_sf"/>
</dbReference>
<dbReference type="NCBIfam" id="TIGR00673">
    <property type="entry name" value="cynS"/>
    <property type="match status" value="1"/>
</dbReference>
<dbReference type="NCBIfam" id="NF002773">
    <property type="entry name" value="PRK02866.1"/>
    <property type="match status" value="1"/>
</dbReference>
<dbReference type="PANTHER" id="PTHR34186">
    <property type="entry name" value="CYANATE HYDRATASE"/>
    <property type="match status" value="1"/>
</dbReference>
<dbReference type="PANTHER" id="PTHR34186:SF2">
    <property type="entry name" value="CYANATE HYDRATASE"/>
    <property type="match status" value="1"/>
</dbReference>
<dbReference type="Pfam" id="PF02560">
    <property type="entry name" value="Cyanate_lyase"/>
    <property type="match status" value="1"/>
</dbReference>
<dbReference type="Pfam" id="PF21291">
    <property type="entry name" value="CYNS_N"/>
    <property type="match status" value="1"/>
</dbReference>
<dbReference type="PIRSF" id="PIRSF001263">
    <property type="entry name" value="Cyanate_hydratas"/>
    <property type="match status" value="1"/>
</dbReference>
<dbReference type="PRINTS" id="PR01693">
    <property type="entry name" value="CYANASE"/>
</dbReference>
<dbReference type="SMART" id="SM01116">
    <property type="entry name" value="Cyanate_lyase"/>
    <property type="match status" value="1"/>
</dbReference>
<dbReference type="SUPFAM" id="SSF55234">
    <property type="entry name" value="Cyanase C-terminal domain"/>
    <property type="match status" value="1"/>
</dbReference>
<dbReference type="SUPFAM" id="SSF47413">
    <property type="entry name" value="lambda repressor-like DNA-binding domains"/>
    <property type="match status" value="1"/>
</dbReference>
<protein>
    <recommendedName>
        <fullName evidence="1">Cyanate hydratase</fullName>
        <shortName evidence="1">Cyanase</shortName>
        <ecNumber evidence="1">4.2.1.104</ecNumber>
    </recommendedName>
    <alternativeName>
        <fullName evidence="1">Cyanate hydrolase</fullName>
    </alternativeName>
    <alternativeName>
        <fullName evidence="1">Cyanate lyase</fullName>
    </alternativeName>
</protein>
<gene>
    <name evidence="1" type="primary">cynS</name>
    <name type="ordered locus">MAP_4098</name>
</gene>
<keyword id="KW-0456">Lyase</keyword>
<keyword id="KW-1185">Reference proteome</keyword>
<sequence length="155" mass="16941">MLGRMTRNQLTEQIVVARLAKGLTWQELADAIGRPLLWTTSALLGQHPIPAELGRILVDKLGLDESAVPVLAAPPMRGGLPTAVPTDPTIYRFYEALQVYGGALKEVIAEQFGDGIMSAINFSVDLQKKPHPSGDRVVVTFDGKFLPYQWVSSEQ</sequence>
<accession>P61192</accession>